<name>RS15_SHOC1</name>
<protein>
    <recommendedName>
        <fullName evidence="1">Small ribosomal subunit protein uS15</fullName>
    </recommendedName>
    <alternativeName>
        <fullName evidence="2">30S ribosomal protein S15</fullName>
    </alternativeName>
</protein>
<reference key="1">
    <citation type="submission" date="2003-10" db="EMBL/GenBank/DDBJ databases">
        <title>The complete genome sequence of the alkaliphilic Bacillus clausii KSM-K16.</title>
        <authorList>
            <person name="Takaki Y."/>
            <person name="Kageyama Y."/>
            <person name="Shimamura S."/>
            <person name="Suzuki H."/>
            <person name="Nishi S."/>
            <person name="Hatada Y."/>
            <person name="Kawai S."/>
            <person name="Ito S."/>
            <person name="Horikoshi K."/>
        </authorList>
    </citation>
    <scope>NUCLEOTIDE SEQUENCE [LARGE SCALE GENOMIC DNA]</scope>
    <source>
        <strain>KSM-K16</strain>
    </source>
</reference>
<comment type="function">
    <text evidence="1">One of the primary rRNA binding proteins, it binds directly to 16S rRNA where it helps nucleate assembly of the platform of the 30S subunit by binding and bridging several RNA helices of the 16S rRNA.</text>
</comment>
<comment type="function">
    <text evidence="1">Forms an intersubunit bridge (bridge B4) with the 23S rRNA of the 50S subunit in the ribosome.</text>
</comment>
<comment type="subunit">
    <text evidence="1">Part of the 30S ribosomal subunit. Forms a bridge to the 50S subunit in the 70S ribosome, contacting the 23S rRNA.</text>
</comment>
<comment type="similarity">
    <text evidence="1">Belongs to the universal ribosomal protein uS15 family.</text>
</comment>
<keyword id="KW-1185">Reference proteome</keyword>
<keyword id="KW-0687">Ribonucleoprotein</keyword>
<keyword id="KW-0689">Ribosomal protein</keyword>
<keyword id="KW-0694">RNA-binding</keyword>
<keyword id="KW-0699">rRNA-binding</keyword>
<organism>
    <name type="scientific">Shouchella clausii (strain KSM-K16)</name>
    <name type="common">Alkalihalobacillus clausii</name>
    <dbReference type="NCBI Taxonomy" id="66692"/>
    <lineage>
        <taxon>Bacteria</taxon>
        <taxon>Bacillati</taxon>
        <taxon>Bacillota</taxon>
        <taxon>Bacilli</taxon>
        <taxon>Bacillales</taxon>
        <taxon>Bacillaceae</taxon>
        <taxon>Shouchella</taxon>
    </lineage>
</organism>
<sequence length="89" mass="10531">MALTQERKNELIAEFKTHETDTGSPEVQVAILTEQINTLNDHLRTHKKDHHSRRGLLKMVGQRRNLLTYLRNKDVTRYRNLVDKLGLRR</sequence>
<feature type="chain" id="PRO_0000115377" description="Small ribosomal subunit protein uS15">
    <location>
        <begin position="1"/>
        <end position="89"/>
    </location>
</feature>
<gene>
    <name evidence="1" type="primary">rpsO</name>
    <name type="ordered locus">ABC2223</name>
</gene>
<accession>Q5WFU7</accession>
<evidence type="ECO:0000255" key="1">
    <source>
        <dbReference type="HAMAP-Rule" id="MF_01343"/>
    </source>
</evidence>
<evidence type="ECO:0000305" key="2"/>
<dbReference type="EMBL" id="AP006627">
    <property type="protein sequence ID" value="BAD64758.1"/>
    <property type="molecule type" value="Genomic_DNA"/>
</dbReference>
<dbReference type="RefSeq" id="WP_011247066.1">
    <property type="nucleotide sequence ID" value="NC_006582.1"/>
</dbReference>
<dbReference type="SMR" id="Q5WFU7"/>
<dbReference type="STRING" id="66692.ABC2223"/>
<dbReference type="GeneID" id="86926373"/>
<dbReference type="KEGG" id="bcl:ABC2223"/>
<dbReference type="eggNOG" id="COG0184">
    <property type="taxonomic scope" value="Bacteria"/>
</dbReference>
<dbReference type="HOGENOM" id="CLU_148518_0_0_9"/>
<dbReference type="OrthoDB" id="9799262at2"/>
<dbReference type="Proteomes" id="UP000001168">
    <property type="component" value="Chromosome"/>
</dbReference>
<dbReference type="GO" id="GO:0022627">
    <property type="term" value="C:cytosolic small ribosomal subunit"/>
    <property type="evidence" value="ECO:0007669"/>
    <property type="project" value="TreeGrafter"/>
</dbReference>
<dbReference type="GO" id="GO:0019843">
    <property type="term" value="F:rRNA binding"/>
    <property type="evidence" value="ECO:0007669"/>
    <property type="project" value="UniProtKB-UniRule"/>
</dbReference>
<dbReference type="GO" id="GO:0003735">
    <property type="term" value="F:structural constituent of ribosome"/>
    <property type="evidence" value="ECO:0007669"/>
    <property type="project" value="InterPro"/>
</dbReference>
<dbReference type="GO" id="GO:0006412">
    <property type="term" value="P:translation"/>
    <property type="evidence" value="ECO:0007669"/>
    <property type="project" value="UniProtKB-UniRule"/>
</dbReference>
<dbReference type="CDD" id="cd00353">
    <property type="entry name" value="Ribosomal_S15p_S13e"/>
    <property type="match status" value="1"/>
</dbReference>
<dbReference type="FunFam" id="1.10.287.10:FF:000002">
    <property type="entry name" value="30S ribosomal protein S15"/>
    <property type="match status" value="1"/>
</dbReference>
<dbReference type="Gene3D" id="6.10.250.3130">
    <property type="match status" value="1"/>
</dbReference>
<dbReference type="Gene3D" id="1.10.287.10">
    <property type="entry name" value="S15/NS1, RNA-binding"/>
    <property type="match status" value="1"/>
</dbReference>
<dbReference type="HAMAP" id="MF_01343_B">
    <property type="entry name" value="Ribosomal_uS15_B"/>
    <property type="match status" value="1"/>
</dbReference>
<dbReference type="InterPro" id="IPR000589">
    <property type="entry name" value="Ribosomal_uS15"/>
</dbReference>
<dbReference type="InterPro" id="IPR005290">
    <property type="entry name" value="Ribosomal_uS15_bac-type"/>
</dbReference>
<dbReference type="InterPro" id="IPR009068">
    <property type="entry name" value="uS15_NS1_RNA-bd_sf"/>
</dbReference>
<dbReference type="NCBIfam" id="TIGR00952">
    <property type="entry name" value="S15_bact"/>
    <property type="match status" value="1"/>
</dbReference>
<dbReference type="PANTHER" id="PTHR23321">
    <property type="entry name" value="RIBOSOMAL PROTEIN S15, BACTERIAL AND ORGANELLAR"/>
    <property type="match status" value="1"/>
</dbReference>
<dbReference type="PANTHER" id="PTHR23321:SF26">
    <property type="entry name" value="SMALL RIBOSOMAL SUBUNIT PROTEIN US15M"/>
    <property type="match status" value="1"/>
</dbReference>
<dbReference type="Pfam" id="PF00312">
    <property type="entry name" value="Ribosomal_S15"/>
    <property type="match status" value="1"/>
</dbReference>
<dbReference type="SMART" id="SM01387">
    <property type="entry name" value="Ribosomal_S15"/>
    <property type="match status" value="1"/>
</dbReference>
<dbReference type="SUPFAM" id="SSF47060">
    <property type="entry name" value="S15/NS1 RNA-binding domain"/>
    <property type="match status" value="1"/>
</dbReference>
<dbReference type="PROSITE" id="PS00362">
    <property type="entry name" value="RIBOSOMAL_S15"/>
    <property type="match status" value="1"/>
</dbReference>
<proteinExistence type="inferred from homology"/>